<feature type="chain" id="PRO_0000378958" description="Lateral signaling target protein 2 homolog">
    <location>
        <begin position="1"/>
        <end position="912"/>
    </location>
</feature>
<feature type="zinc finger region" description="FYVE-type" evidence="2">
    <location>
        <begin position="850"/>
        <end position="910"/>
    </location>
</feature>
<feature type="region of interest" description="Disordered" evidence="3">
    <location>
        <begin position="323"/>
        <end position="360"/>
    </location>
</feature>
<feature type="region of interest" description="Disordered" evidence="3">
    <location>
        <begin position="455"/>
        <end position="610"/>
    </location>
</feature>
<feature type="region of interest" description="Disordered" evidence="3">
    <location>
        <begin position="664"/>
        <end position="745"/>
    </location>
</feature>
<feature type="region of interest" description="Disordered" evidence="3">
    <location>
        <begin position="769"/>
        <end position="846"/>
    </location>
</feature>
<feature type="compositionally biased region" description="Low complexity" evidence="3">
    <location>
        <begin position="323"/>
        <end position="332"/>
    </location>
</feature>
<feature type="compositionally biased region" description="Basic and acidic residues" evidence="3">
    <location>
        <begin position="333"/>
        <end position="355"/>
    </location>
</feature>
<feature type="compositionally biased region" description="Polar residues" evidence="3">
    <location>
        <begin position="455"/>
        <end position="468"/>
    </location>
</feature>
<feature type="compositionally biased region" description="Acidic residues" evidence="3">
    <location>
        <begin position="486"/>
        <end position="505"/>
    </location>
</feature>
<feature type="compositionally biased region" description="Basic residues" evidence="3">
    <location>
        <begin position="530"/>
        <end position="544"/>
    </location>
</feature>
<feature type="compositionally biased region" description="Polar residues" evidence="3">
    <location>
        <begin position="545"/>
        <end position="556"/>
    </location>
</feature>
<feature type="compositionally biased region" description="Polar residues" evidence="3">
    <location>
        <begin position="572"/>
        <end position="590"/>
    </location>
</feature>
<feature type="compositionally biased region" description="Low complexity" evidence="3">
    <location>
        <begin position="591"/>
        <end position="610"/>
    </location>
</feature>
<feature type="compositionally biased region" description="Basic and acidic residues" evidence="3">
    <location>
        <begin position="682"/>
        <end position="699"/>
    </location>
</feature>
<feature type="compositionally biased region" description="Polar residues" evidence="3">
    <location>
        <begin position="705"/>
        <end position="717"/>
    </location>
</feature>
<feature type="compositionally biased region" description="Polar residues" evidence="3">
    <location>
        <begin position="735"/>
        <end position="745"/>
    </location>
</feature>
<feature type="compositionally biased region" description="Polar residues" evidence="3">
    <location>
        <begin position="780"/>
        <end position="801"/>
    </location>
</feature>
<feature type="compositionally biased region" description="Polar residues" evidence="3">
    <location>
        <begin position="822"/>
        <end position="834"/>
    </location>
</feature>
<feature type="binding site" evidence="2">
    <location>
        <position position="856"/>
    </location>
    <ligand>
        <name>Zn(2+)</name>
        <dbReference type="ChEBI" id="CHEBI:29105"/>
        <label>1</label>
    </ligand>
</feature>
<feature type="binding site" evidence="2">
    <location>
        <position position="859"/>
    </location>
    <ligand>
        <name>Zn(2+)</name>
        <dbReference type="ChEBI" id="CHEBI:29105"/>
        <label>1</label>
    </ligand>
</feature>
<feature type="binding site" evidence="2">
    <location>
        <position position="872"/>
    </location>
    <ligand>
        <name>Zn(2+)</name>
        <dbReference type="ChEBI" id="CHEBI:29105"/>
        <label>2</label>
    </ligand>
</feature>
<feature type="binding site" evidence="2">
    <location>
        <position position="875"/>
    </location>
    <ligand>
        <name>Zn(2+)</name>
        <dbReference type="ChEBI" id="CHEBI:29105"/>
        <label>2</label>
    </ligand>
</feature>
<feature type="binding site" evidence="2">
    <location>
        <position position="880"/>
    </location>
    <ligand>
        <name>Zn(2+)</name>
        <dbReference type="ChEBI" id="CHEBI:29105"/>
        <label>1</label>
    </ligand>
</feature>
<feature type="binding site" evidence="2">
    <location>
        <position position="883"/>
    </location>
    <ligand>
        <name>Zn(2+)</name>
        <dbReference type="ChEBI" id="CHEBI:29105"/>
        <label>1</label>
    </ligand>
</feature>
<feature type="binding site" evidence="2">
    <location>
        <position position="902"/>
    </location>
    <ligand>
        <name>Zn(2+)</name>
        <dbReference type="ChEBI" id="CHEBI:29105"/>
        <label>2</label>
    </ligand>
</feature>
<feature type="binding site" evidence="2">
    <location>
        <position position="905"/>
    </location>
    <ligand>
        <name>Zn(2+)</name>
        <dbReference type="ChEBI" id="CHEBI:29105"/>
        <label>2</label>
    </ligand>
</feature>
<dbReference type="EMBL" id="CH477332">
    <property type="protein sequence ID" value="EAT43310.1"/>
    <property type="molecule type" value="Genomic_DNA"/>
</dbReference>
<dbReference type="RefSeq" id="XP_001650569.1">
    <property type="nucleotide sequence ID" value="XM_001650519.1"/>
</dbReference>
<dbReference type="SMR" id="Q17AN2"/>
<dbReference type="FunCoup" id="Q17AN2">
    <property type="interactions" value="181"/>
</dbReference>
<dbReference type="PaxDb" id="7159-AAEL005241-PA"/>
<dbReference type="VEuPathDB" id="VectorBase:AAEL025488"/>
<dbReference type="eggNOG" id="KOG1818">
    <property type="taxonomic scope" value="Eukaryota"/>
</dbReference>
<dbReference type="eggNOG" id="KOG1819">
    <property type="taxonomic scope" value="Eukaryota"/>
</dbReference>
<dbReference type="HOGENOM" id="CLU_007360_1_0_1"/>
<dbReference type="InParanoid" id="Q17AN2"/>
<dbReference type="OMA" id="CYVREVQ"/>
<dbReference type="PhylomeDB" id="Q17AN2"/>
<dbReference type="Proteomes" id="UP000008820">
    <property type="component" value="Chromosome 1"/>
</dbReference>
<dbReference type="Proteomes" id="UP000682892">
    <property type="component" value="Chromosome 1"/>
</dbReference>
<dbReference type="GO" id="GO:0031901">
    <property type="term" value="C:early endosome membrane"/>
    <property type="evidence" value="ECO:0007669"/>
    <property type="project" value="TreeGrafter"/>
</dbReference>
<dbReference type="GO" id="GO:0008270">
    <property type="term" value="F:zinc ion binding"/>
    <property type="evidence" value="ECO:0007669"/>
    <property type="project" value="UniProtKB-KW"/>
</dbReference>
<dbReference type="CDD" id="cd15731">
    <property type="entry name" value="FYVE_LST2"/>
    <property type="match status" value="1"/>
</dbReference>
<dbReference type="FunFam" id="3.30.40.10:FF:000073">
    <property type="entry name" value="myotubularin-related protein 4 isoform X2"/>
    <property type="match status" value="1"/>
</dbReference>
<dbReference type="Gene3D" id="3.30.40.10">
    <property type="entry name" value="Zinc/RING finger domain, C3HC4 (zinc finger)"/>
    <property type="match status" value="1"/>
</dbReference>
<dbReference type="InterPro" id="IPR043269">
    <property type="entry name" value="FYVE_LST2"/>
</dbReference>
<dbReference type="InterPro" id="IPR051118">
    <property type="entry name" value="LST-2"/>
</dbReference>
<dbReference type="InterPro" id="IPR000306">
    <property type="entry name" value="Znf_FYVE"/>
</dbReference>
<dbReference type="InterPro" id="IPR017455">
    <property type="entry name" value="Znf_FYVE-rel"/>
</dbReference>
<dbReference type="InterPro" id="IPR011011">
    <property type="entry name" value="Znf_FYVE_PHD"/>
</dbReference>
<dbReference type="InterPro" id="IPR013083">
    <property type="entry name" value="Znf_RING/FYVE/PHD"/>
</dbReference>
<dbReference type="PANTHER" id="PTHR46465">
    <property type="entry name" value="LATERAL SIGNALING TARGET PROTEIN 2 HOMOLOG"/>
    <property type="match status" value="1"/>
</dbReference>
<dbReference type="PANTHER" id="PTHR46465:SF2">
    <property type="entry name" value="LATERAL SIGNALING TARGET PROTEIN 2 HOMOLOG"/>
    <property type="match status" value="1"/>
</dbReference>
<dbReference type="Pfam" id="PF01363">
    <property type="entry name" value="FYVE"/>
    <property type="match status" value="1"/>
</dbReference>
<dbReference type="SMART" id="SM00064">
    <property type="entry name" value="FYVE"/>
    <property type="match status" value="1"/>
</dbReference>
<dbReference type="SUPFAM" id="SSF57903">
    <property type="entry name" value="FYVE/PHD zinc finger"/>
    <property type="match status" value="1"/>
</dbReference>
<dbReference type="PROSITE" id="PS50178">
    <property type="entry name" value="ZF_FYVE"/>
    <property type="match status" value="1"/>
</dbReference>
<protein>
    <recommendedName>
        <fullName>Lateral signaling target protein 2 homolog</fullName>
    </recommendedName>
</protein>
<organism>
    <name type="scientific">Aedes aegypti</name>
    <name type="common">Yellowfever mosquito</name>
    <name type="synonym">Culex aegypti</name>
    <dbReference type="NCBI Taxonomy" id="7159"/>
    <lineage>
        <taxon>Eukaryota</taxon>
        <taxon>Metazoa</taxon>
        <taxon>Ecdysozoa</taxon>
        <taxon>Arthropoda</taxon>
        <taxon>Hexapoda</taxon>
        <taxon>Insecta</taxon>
        <taxon>Pterygota</taxon>
        <taxon>Neoptera</taxon>
        <taxon>Endopterygota</taxon>
        <taxon>Diptera</taxon>
        <taxon>Nematocera</taxon>
        <taxon>Culicoidea</taxon>
        <taxon>Culicidae</taxon>
        <taxon>Culicinae</taxon>
        <taxon>Aedini</taxon>
        <taxon>Aedes</taxon>
        <taxon>Stegomyia</taxon>
    </lineage>
</organism>
<accession>Q17AN2</accession>
<evidence type="ECO:0000250" key="1"/>
<evidence type="ECO:0000255" key="2">
    <source>
        <dbReference type="PROSITE-ProRule" id="PRU00091"/>
    </source>
</evidence>
<evidence type="ECO:0000256" key="3">
    <source>
        <dbReference type="SAM" id="MobiDB-lite"/>
    </source>
</evidence>
<evidence type="ECO:0000305" key="4"/>
<reference key="1">
    <citation type="journal article" date="2007" name="Science">
        <title>Genome sequence of Aedes aegypti, a major arbovirus vector.</title>
        <authorList>
            <person name="Nene V."/>
            <person name="Wortman J.R."/>
            <person name="Lawson D."/>
            <person name="Haas B.J."/>
            <person name="Kodira C.D."/>
            <person name="Tu Z.J."/>
            <person name="Loftus B.J."/>
            <person name="Xi Z."/>
            <person name="Megy K."/>
            <person name="Grabherr M."/>
            <person name="Ren Q."/>
            <person name="Zdobnov E.M."/>
            <person name="Lobo N.F."/>
            <person name="Campbell K.S."/>
            <person name="Brown S.E."/>
            <person name="Bonaldo M.F."/>
            <person name="Zhu J."/>
            <person name="Sinkins S.P."/>
            <person name="Hogenkamp D.G."/>
            <person name="Amedeo P."/>
            <person name="Arensburger P."/>
            <person name="Atkinson P.W."/>
            <person name="Bidwell S.L."/>
            <person name="Biedler J."/>
            <person name="Birney E."/>
            <person name="Bruggner R.V."/>
            <person name="Costas J."/>
            <person name="Coy M.R."/>
            <person name="Crabtree J."/>
            <person name="Crawford M."/>
            <person name="DeBruyn B."/>
            <person name="DeCaprio D."/>
            <person name="Eiglmeier K."/>
            <person name="Eisenstadt E."/>
            <person name="El-Dorry H."/>
            <person name="Gelbart W.M."/>
            <person name="Gomes S.L."/>
            <person name="Hammond M."/>
            <person name="Hannick L.I."/>
            <person name="Hogan J.R."/>
            <person name="Holmes M.H."/>
            <person name="Jaffe D."/>
            <person name="Johnston S.J."/>
            <person name="Kennedy R.C."/>
            <person name="Koo H."/>
            <person name="Kravitz S."/>
            <person name="Kriventseva E.V."/>
            <person name="Kulp D."/>
            <person name="Labutti K."/>
            <person name="Lee E."/>
            <person name="Li S."/>
            <person name="Lovin D.D."/>
            <person name="Mao C."/>
            <person name="Mauceli E."/>
            <person name="Menck C.F."/>
            <person name="Miller J.R."/>
            <person name="Montgomery P."/>
            <person name="Mori A."/>
            <person name="Nascimento A.L."/>
            <person name="Naveira H.F."/>
            <person name="Nusbaum C."/>
            <person name="O'Leary S.B."/>
            <person name="Orvis J."/>
            <person name="Pertea M."/>
            <person name="Quesneville H."/>
            <person name="Reidenbach K.R."/>
            <person name="Rogers Y.-H.C."/>
            <person name="Roth C.W."/>
            <person name="Schneider J.R."/>
            <person name="Schatz M."/>
            <person name="Shumway M."/>
            <person name="Stanke M."/>
            <person name="Stinson E.O."/>
            <person name="Tubio J.M.C."/>
            <person name="Vanzee J.P."/>
            <person name="Verjovski-Almeida S."/>
            <person name="Werner D."/>
            <person name="White O.R."/>
            <person name="Wyder S."/>
            <person name="Zeng Q."/>
            <person name="Zhao Q."/>
            <person name="Zhao Y."/>
            <person name="Hill C.A."/>
            <person name="Raikhel A.S."/>
            <person name="Soares M.B."/>
            <person name="Knudson D.L."/>
            <person name="Lee N.H."/>
            <person name="Galagan J."/>
            <person name="Salzberg S.L."/>
            <person name="Paulsen I.T."/>
            <person name="Dimopoulos G."/>
            <person name="Collins F.H."/>
            <person name="Bruce B."/>
            <person name="Fraser-Liggett C.M."/>
            <person name="Severson D.W."/>
        </authorList>
    </citation>
    <scope>NUCLEOTIDE SEQUENCE [LARGE SCALE GENOMIC DNA]</scope>
    <source>
        <strain>LVPib12</strain>
    </source>
</reference>
<gene>
    <name type="ORF">AAEL005241</name>
</gene>
<comment type="function">
    <text evidence="1">Negative regulator of epidermal growth factor receptor (EGFR) signaling.</text>
</comment>
<comment type="similarity">
    <text evidence="4">Belongs to the lst-2 family.</text>
</comment>
<sequence>MADDKSLLARFYHADRALTAVASELDSFDGRAEPVRCTRLVGRLRQGQDRVLAITNQIMDELLGDDRAPRAFRAKFPEEVLQESLAGQLWFGAECLAAGSSIMNREVESGVMRPLAKAVTKSLDNVRNLLREQCLRNNTPNSLTLRLDINDAATEQLYESLKIFDRLFAEFELLYVSAMVQVKSKQEYEMQELICVLFSETLQRALKIGLLEQEQVDSYDPALMFSIPRLAIVAGLVIFKDGPLNMDQPADNISEMFRPFRKLLIKMRDLLRTLTKHELYQLEKLLCTNEEISLKEELICDANENDSSDVLPQEDHVVIVTTNVNTSNNSDNSDSRVDDSPNDELRHESETRDNRNSSFYSNRIIDSNRLHADVEDDVSENDDDDDPSNVLKDSLVTTDCASGYLIPNTNFGNLLQTNEAPLTDSFIATDEELKLGTSSNARIEQILSETNQKLADSGLGTANPSVDNSPELDTERPITSRSACESSEEGEIDEYDNEEDDEDSDNNLSNQQLMDPGSSAGTSQSAGKPYRTHKQQHHHRHRRSSGSIMSATSSRKYNSKHHKASASASVIVPSNQGTSSKTYSNCDTSPSSGNQSECSSTSSTTGESSQDVAMAIRAAGRIKFKTTENLLHRLFVCIAGVADQLQTNFAADLRQMLKSVFIINSSPPEPEEPPELAPTSSDKPKEPDPTDLFEFRASEQDVITPGQNSGGSSQSIYSAEEVNPEDPHDSVFGSPGTSPIRASSAPRTMMTTAESGGVTVNVSVSVVTGGGSSSSRNVQERSVSLSETSIVVENNGGATDSNLRDSHRRHSAIGSKGEYGRSRSSPNSPVNGTSAEERRMPEAPPRWIPDGDAPRCMACASSFTPFRRRHHCRNCGGVFCGVCSSASAPLPKYGLTKAVRVCRDCYVREVGT</sequence>
<keyword id="KW-0479">Metal-binding</keyword>
<keyword id="KW-1185">Reference proteome</keyword>
<keyword id="KW-0862">Zinc</keyword>
<keyword id="KW-0863">Zinc-finger</keyword>
<proteinExistence type="inferred from homology"/>
<name>LST2_AEDAE</name>